<protein>
    <recommendedName>
        <fullName evidence="11">Laccase-1</fullName>
        <ecNumber evidence="8">1.10.3.2</ecNumber>
    </recommendedName>
    <alternativeName>
        <fullName evidence="11">Diphenol oxidase 1</fullName>
    </alternativeName>
</protein>
<reference key="1">
    <citation type="journal article" date="2014" name="PLoS Genet.">
        <title>Analysis of the genome and transcriptome of Cryptococcus neoformans var. grubii reveals complex RNA expression and microevolution leading to virulence attenuation.</title>
        <authorList>
            <person name="Janbon G."/>
            <person name="Ormerod K.L."/>
            <person name="Paulet D."/>
            <person name="Byrnes E.J. III"/>
            <person name="Yadav V."/>
            <person name="Chatterjee G."/>
            <person name="Mullapudi N."/>
            <person name="Hon C.-C."/>
            <person name="Billmyre R.B."/>
            <person name="Brunel F."/>
            <person name="Bahn Y.-S."/>
            <person name="Chen W."/>
            <person name="Chen Y."/>
            <person name="Chow E.W.L."/>
            <person name="Coppee J.-Y."/>
            <person name="Floyd-Averette A."/>
            <person name="Gaillardin C."/>
            <person name="Gerik K.J."/>
            <person name="Goldberg J."/>
            <person name="Gonzalez-Hilarion S."/>
            <person name="Gujja S."/>
            <person name="Hamlin J.L."/>
            <person name="Hsueh Y.-P."/>
            <person name="Ianiri G."/>
            <person name="Jones S."/>
            <person name="Kodira C.D."/>
            <person name="Kozubowski L."/>
            <person name="Lam W."/>
            <person name="Marra M."/>
            <person name="Mesner L.D."/>
            <person name="Mieczkowski P.A."/>
            <person name="Moyrand F."/>
            <person name="Nielsen K."/>
            <person name="Proux C."/>
            <person name="Rossignol T."/>
            <person name="Schein J.E."/>
            <person name="Sun S."/>
            <person name="Wollschlaeger C."/>
            <person name="Wood I.A."/>
            <person name="Zeng Q."/>
            <person name="Neuveglise C."/>
            <person name="Newlon C.S."/>
            <person name="Perfect J.R."/>
            <person name="Lodge J.K."/>
            <person name="Idnurm A."/>
            <person name="Stajich J.E."/>
            <person name="Kronstad J.W."/>
            <person name="Sanyal K."/>
            <person name="Heitman J."/>
            <person name="Fraser J.A."/>
            <person name="Cuomo C.A."/>
            <person name="Dietrich F.S."/>
        </authorList>
    </citation>
    <scope>NUCLEOTIDE SEQUENCE [LARGE SCALE GENOMIC DNA]</scope>
    <source>
        <strain>H99 / ATCC 208821 / CBS 10515 / FGSC 9487</strain>
    </source>
</reference>
<reference key="2">
    <citation type="journal article" date="2001" name="Infect. Immun.">
        <title>Laccase of Cryptococcus neoformans is a cell wall-associated virulence factor.</title>
        <authorList>
            <person name="Zhu X."/>
            <person name="Gibbons J."/>
            <person name="Garcia-Rivera J."/>
            <person name="Casadevall A."/>
            <person name="Williamson P.R."/>
        </authorList>
    </citation>
    <scope>SUBCELLULAR LOCATION</scope>
</reference>
<reference key="3">
    <citation type="journal article" date="2003" name="Mol. Microbiol.">
        <title>Copper-mediated reversal of defective laccase in a Deltavph1 avirulent mutant of Cryptococcus neoformans.</title>
        <authorList>
            <person name="Zhu X."/>
            <person name="Gibbons J."/>
            <person name="Zhang S."/>
            <person name="Williamson P.R."/>
        </authorList>
    </citation>
    <scope>INDUCTION</scope>
    <scope>SUBCELLULAR LOCATION</scope>
    <scope>CATALYTIC ACTIVITY</scope>
</reference>
<reference key="4">
    <citation type="journal article" date="2004" name="FEMS Yeast Res.">
        <title>Role of laccase in the biology and virulence of Cryptococcus neoformans.</title>
        <authorList>
            <person name="Zhu X."/>
            <person name="Williamson P.R."/>
        </authorList>
    </citation>
    <scope>REVIEW</scope>
</reference>
<reference key="5">
    <citation type="journal article" date="2006" name="Eukaryot. Cell">
        <title>Lipid rafts in Cryptococcus neoformans concentrate the virulence determinants phospholipase B1 and Cu/Zn superoxide dismutase.</title>
        <authorList>
            <person name="Siafakas A.R."/>
            <person name="Wright L.C."/>
            <person name="Sorrell T.C."/>
            <person name="Djordjevic J.T."/>
        </authorList>
    </citation>
    <scope>SUBCELLULAR LOCATION</scope>
</reference>
<sequence>MRGVVKLFFLSCSLVSLVSSEETGKSPTANYDHYMPKATATIDPSVFALSNDFEITDVPTTREYTFDITKALASPDGYEREVYVVNNMFPGPVIEANTGDTIIVHVNNHLEEGQSIHWHGLRQLGTAFMDGVPGITQCPIPPGSSFTYQFTVSHQSGTFWWHSHYSNSMADGIWGPLIIHSPNEPLQRGRDYDEDRIVFITDWVHDNSEVVIAALATPEGYKGSPAPPQGDAILINGRGQTNCTATGSSSCTYPPPPEIHVPVNCRVRLRFISATAHPMYRITIDNHPLEVVETDGTAVYGPTVHEISIAPGERYSAIINTSEGKEGDAFWLRTSVALGCMFGGIDQVGLAVVRYTGNGMVSTEEPQTTAWSDLAGATTPCAGLDQTYTLSPRESFSAPREFSQSHVFNSQRGAFVNVYGNTFQGYGFNNISYQNQIFNPLLSIVQRGGSCESTLVASTTFPDLGSGNIIINNLDGVIDHPYHLHGNEFQVIGRGTGALSLDNLTNIDFNLDNPVRKDTLWIQGGSWVVLRITTDNPGVWALHCHIGWHLTEGKLAVVVIQPGAIGHMEGPESWTNLCANTDPNAFGPARRSPSPSIQSSKTSTFQYLREVKGKVVKRRGAREA</sequence>
<evidence type="ECO:0000250" key="1">
    <source>
        <dbReference type="UniProtKB" id="D0VWU3"/>
    </source>
</evidence>
<evidence type="ECO:0000250" key="2">
    <source>
        <dbReference type="UniProtKB" id="Q55P57"/>
    </source>
</evidence>
<evidence type="ECO:0000250" key="3">
    <source>
        <dbReference type="UniProtKB" id="Q70KY3"/>
    </source>
</evidence>
<evidence type="ECO:0000255" key="4"/>
<evidence type="ECO:0000255" key="5">
    <source>
        <dbReference type="PROSITE-ProRule" id="PRU00498"/>
    </source>
</evidence>
<evidence type="ECO:0000256" key="6">
    <source>
        <dbReference type="SAM" id="MobiDB-lite"/>
    </source>
</evidence>
<evidence type="ECO:0000269" key="7">
    <source>
    </source>
</evidence>
<evidence type="ECO:0000269" key="8">
    <source>
    </source>
</evidence>
<evidence type="ECO:0000269" key="9">
    <source>
    </source>
</evidence>
<evidence type="ECO:0000303" key="10">
    <source>
    </source>
</evidence>
<evidence type="ECO:0000305" key="11"/>
<accession>J9VY90</accession>
<proteinExistence type="evidence at protein level"/>
<name>LAC1_CRYNH</name>
<organism>
    <name type="scientific">Cryptococcus neoformans var. grubii serotype A (strain H99 / ATCC 208821 / CBS 10515 / FGSC 9487)</name>
    <name type="common">Filobasidiella neoformans var. grubii</name>
    <dbReference type="NCBI Taxonomy" id="235443"/>
    <lineage>
        <taxon>Eukaryota</taxon>
        <taxon>Fungi</taxon>
        <taxon>Dikarya</taxon>
        <taxon>Basidiomycota</taxon>
        <taxon>Agaricomycotina</taxon>
        <taxon>Tremellomycetes</taxon>
        <taxon>Tremellales</taxon>
        <taxon>Cryptococcaceae</taxon>
        <taxon>Cryptococcus</taxon>
        <taxon>Cryptococcus neoformans species complex</taxon>
    </lineage>
</organism>
<dbReference type="EC" id="1.10.3.2" evidence="8"/>
<dbReference type="EMBL" id="CP003827">
    <property type="protein sequence ID" value="AFR96690.1"/>
    <property type="molecule type" value="Genomic_DNA"/>
</dbReference>
<dbReference type="RefSeq" id="XP_012051278.1">
    <property type="nucleotide sequence ID" value="XM_012195888.1"/>
</dbReference>
<dbReference type="SMR" id="J9VY90"/>
<dbReference type="GlyCosmos" id="J9VY90">
    <property type="glycosylation" value="4 sites, No reported glycans"/>
</dbReference>
<dbReference type="GeneID" id="23886969"/>
<dbReference type="KEGG" id="cng:CNAG_03465"/>
<dbReference type="VEuPathDB" id="FungiDB:CNAG_03465"/>
<dbReference type="HOGENOM" id="CLU_006504_7_1_1"/>
<dbReference type="OrthoDB" id="4810at5206"/>
<dbReference type="PHI-base" id="PHI:10688"/>
<dbReference type="PHI-base" id="PHI:9058"/>
<dbReference type="Proteomes" id="UP000010091">
    <property type="component" value="Chromosome 8"/>
</dbReference>
<dbReference type="GO" id="GO:0005576">
    <property type="term" value="C:extracellular region"/>
    <property type="evidence" value="ECO:0007669"/>
    <property type="project" value="UniProtKB-SubCell"/>
</dbReference>
<dbReference type="GO" id="GO:0005507">
    <property type="term" value="F:copper ion binding"/>
    <property type="evidence" value="ECO:0007669"/>
    <property type="project" value="InterPro"/>
</dbReference>
<dbReference type="GO" id="GO:0052716">
    <property type="term" value="F:hydroquinone:oxygen oxidoreductase activity"/>
    <property type="evidence" value="ECO:0007669"/>
    <property type="project" value="UniProtKB-EC"/>
</dbReference>
<dbReference type="CDD" id="cd13857">
    <property type="entry name" value="CuRO_1_Diphenol_Ox"/>
    <property type="match status" value="1"/>
</dbReference>
<dbReference type="CDD" id="cd13883">
    <property type="entry name" value="CuRO_2_Diphenol_Ox"/>
    <property type="match status" value="1"/>
</dbReference>
<dbReference type="CDD" id="cd13904">
    <property type="entry name" value="CuRO_3_Diphenol_Ox"/>
    <property type="match status" value="1"/>
</dbReference>
<dbReference type="FunFam" id="2.60.40.420:FF:000045">
    <property type="entry name" value="Laccase 2"/>
    <property type="match status" value="1"/>
</dbReference>
<dbReference type="Gene3D" id="2.60.40.420">
    <property type="entry name" value="Cupredoxins - blue copper proteins"/>
    <property type="match status" value="3"/>
</dbReference>
<dbReference type="InterPro" id="IPR011707">
    <property type="entry name" value="Cu-oxidase-like_N"/>
</dbReference>
<dbReference type="InterPro" id="IPR001117">
    <property type="entry name" value="Cu-oxidase_2nd"/>
</dbReference>
<dbReference type="InterPro" id="IPR011706">
    <property type="entry name" value="Cu-oxidase_C"/>
</dbReference>
<dbReference type="InterPro" id="IPR045087">
    <property type="entry name" value="Cu-oxidase_fam"/>
</dbReference>
<dbReference type="InterPro" id="IPR008972">
    <property type="entry name" value="Cupredoxin"/>
</dbReference>
<dbReference type="PANTHER" id="PTHR11709:SF414">
    <property type="entry name" value="ADR239WP"/>
    <property type="match status" value="1"/>
</dbReference>
<dbReference type="PANTHER" id="PTHR11709">
    <property type="entry name" value="MULTI-COPPER OXIDASE"/>
    <property type="match status" value="1"/>
</dbReference>
<dbReference type="Pfam" id="PF00394">
    <property type="entry name" value="Cu-oxidase"/>
    <property type="match status" value="1"/>
</dbReference>
<dbReference type="Pfam" id="PF07731">
    <property type="entry name" value="Cu-oxidase_2"/>
    <property type="match status" value="1"/>
</dbReference>
<dbReference type="Pfam" id="PF07732">
    <property type="entry name" value="Cu-oxidase_3"/>
    <property type="match status" value="1"/>
</dbReference>
<dbReference type="SUPFAM" id="SSF49503">
    <property type="entry name" value="Cupredoxins"/>
    <property type="match status" value="3"/>
</dbReference>
<keyword id="KW-0134">Cell wall</keyword>
<keyword id="KW-0186">Copper</keyword>
<keyword id="KW-1015">Disulfide bond</keyword>
<keyword id="KW-0325">Glycoprotein</keyword>
<keyword id="KW-0479">Metal-binding</keyword>
<keyword id="KW-0560">Oxidoreductase</keyword>
<keyword id="KW-0677">Repeat</keyword>
<keyword id="KW-0964">Secreted</keyword>
<keyword id="KW-0732">Signal</keyword>
<comment type="function">
    <text evidence="2 10">Laccase that catalyzes the oxidation of certain aromatic compounds, including L-dopa, to quinones, which then polymerize to melanin (By similarity). Able to oxidize a wide variety of aromatic diphenol and diamino groups in the ortho, meta, and para positions but not monophenolic groups such as in phenol, tyramine, or tyrosine (By similarity). Plays an important role in virulence (By similarity). Plays a role in dissemination to extrapulmonary sites but is not involved in pulmonary growth or in elicitation of cellular immune responses in the lung (By similarity).</text>
</comment>
<comment type="catalytic activity">
    <reaction evidence="8">
        <text>4 hydroquinone + O2 = 4 benzosemiquinone + 2 H2O</text>
        <dbReference type="Rhea" id="RHEA:11276"/>
        <dbReference type="ChEBI" id="CHEBI:15377"/>
        <dbReference type="ChEBI" id="CHEBI:15379"/>
        <dbReference type="ChEBI" id="CHEBI:17594"/>
        <dbReference type="ChEBI" id="CHEBI:17977"/>
        <dbReference type="EC" id="1.10.3.2"/>
    </reaction>
</comment>
<comment type="cofactor">
    <cofactor evidence="8">
        <name>Cu cation</name>
        <dbReference type="ChEBI" id="CHEBI:23378"/>
    </cofactor>
    <text evidence="3">Binds 4 Cu cations per monomer.</text>
</comment>
<comment type="subcellular location">
    <subcellularLocation>
        <location evidence="7 8">Secreted</location>
    </subcellularLocation>
    <subcellularLocation>
        <location evidence="7 8 9">Secreted</location>
        <location evidence="7 8 9">Cell wall</location>
    </subcellularLocation>
    <text evidence="9">Does not associate with the cell membrane.</text>
</comment>
<comment type="induction">
    <text evidence="8">Induced by copper (PubMed:12581355). Transcriptional induction by copper is dependent on enhancer region II, at position -1792 to -1614 within the 5'-untranslated region (PubMed:12581355).</text>
</comment>
<comment type="similarity">
    <text evidence="11">Belongs to the multicopper oxidase family.</text>
</comment>
<gene>
    <name type="primary">LAC1</name>
    <name type="ORF">CNAG_03465</name>
</gene>
<feature type="signal peptide" evidence="4">
    <location>
        <begin position="1"/>
        <end position="20"/>
    </location>
</feature>
<feature type="chain" id="PRO_5003829395" description="Laccase-1" evidence="4">
    <location>
        <begin position="21"/>
        <end position="624"/>
    </location>
</feature>
<feature type="domain" description="Plastocyanin-like 1" evidence="4">
    <location>
        <begin position="69"/>
        <end position="183"/>
    </location>
</feature>
<feature type="domain" description="Plastocyanin-like 2" evidence="4">
    <location>
        <begin position="195"/>
        <end position="355"/>
    </location>
</feature>
<feature type="domain" description="Plastocyanin-like 3" evidence="4">
    <location>
        <begin position="469"/>
        <end position="562"/>
    </location>
</feature>
<feature type="region of interest" description="Disordered" evidence="6">
    <location>
        <begin position="582"/>
        <end position="603"/>
    </location>
</feature>
<feature type="compositionally biased region" description="Low complexity" evidence="6">
    <location>
        <begin position="592"/>
        <end position="603"/>
    </location>
</feature>
<feature type="binding site" description="type 2 copper site" evidence="1">
    <location>
        <position position="117"/>
    </location>
    <ligand>
        <name>Cu cation</name>
        <dbReference type="ChEBI" id="CHEBI:23378"/>
        <label>1</label>
    </ligand>
</feature>
<feature type="binding site" description="type 3 copper site" evidence="1">
    <location>
        <position position="119"/>
    </location>
    <ligand>
        <name>Cu cation</name>
        <dbReference type="ChEBI" id="CHEBI:23378"/>
        <label>2</label>
    </ligand>
</feature>
<feature type="binding site" description="type 3 copper site" evidence="1">
    <location>
        <position position="162"/>
    </location>
    <ligand>
        <name>Cu cation</name>
        <dbReference type="ChEBI" id="CHEBI:23378"/>
        <label>2</label>
    </ligand>
</feature>
<feature type="binding site" description="type 3 copper site" evidence="1">
    <location>
        <position position="164"/>
    </location>
    <ligand>
        <name>Cu cation</name>
        <dbReference type="ChEBI" id="CHEBI:23378"/>
        <label>3</label>
    </ligand>
</feature>
<feature type="binding site" description="type 1 copper site" evidence="1">
    <location>
        <position position="480"/>
    </location>
    <ligand>
        <name>Cu cation</name>
        <dbReference type="ChEBI" id="CHEBI:23378"/>
        <label>4</label>
    </ligand>
</feature>
<feature type="binding site" description="type 2 copper site" evidence="1">
    <location>
        <position position="483"/>
    </location>
    <ligand>
        <name>Cu cation</name>
        <dbReference type="ChEBI" id="CHEBI:23378"/>
        <label>1</label>
    </ligand>
</feature>
<feature type="binding site" description="type 3 copper site" evidence="1">
    <location>
        <position position="485"/>
    </location>
    <ligand>
        <name>Cu cation</name>
        <dbReference type="ChEBI" id="CHEBI:23378"/>
        <label>3</label>
    </ligand>
</feature>
<feature type="binding site" description="type 3 copper site" evidence="1">
    <location>
        <position position="543"/>
    </location>
    <ligand>
        <name>Cu cation</name>
        <dbReference type="ChEBI" id="CHEBI:23378"/>
        <label>3</label>
    </ligand>
</feature>
<feature type="binding site" description="type 1 copper site" evidence="1">
    <location>
        <position position="544"/>
    </location>
    <ligand>
        <name>Cu cation</name>
        <dbReference type="ChEBI" id="CHEBI:23378"/>
        <label>4</label>
    </ligand>
</feature>
<feature type="binding site" description="type 3 copper site" evidence="1">
    <location>
        <position position="545"/>
    </location>
    <ligand>
        <name>Cu cation</name>
        <dbReference type="ChEBI" id="CHEBI:23378"/>
        <label>2</label>
    </ligand>
</feature>
<feature type="binding site" description="type 1 copper site" evidence="1">
    <location>
        <position position="549"/>
    </location>
    <ligand>
        <name>Cu cation</name>
        <dbReference type="ChEBI" id="CHEBI:23378"/>
        <label>4</label>
    </ligand>
</feature>
<feature type="glycosylation site" description="N-linked (GlcNAc...) asparagine" evidence="5">
    <location>
        <position position="242"/>
    </location>
</feature>
<feature type="glycosylation site" description="N-linked (GlcNAc...) asparagine" evidence="5">
    <location>
        <position position="320"/>
    </location>
</feature>
<feature type="glycosylation site" description="N-linked (GlcNAc...) asparagine" evidence="5">
    <location>
        <position position="430"/>
    </location>
</feature>
<feature type="glycosylation site" description="N-linked (GlcNAc...) asparagine" evidence="5">
    <location>
        <position position="503"/>
    </location>
</feature>
<feature type="disulfide bond" evidence="3">
    <location>
        <begin position="138"/>
        <end position="578"/>
    </location>
</feature>